<feature type="chain" id="PRO_0000394876" description="Probable beta-glucosidase H">
    <location>
        <begin position="1"/>
        <end position="829"/>
    </location>
</feature>
<feature type="domain" description="PA14" evidence="3">
    <location>
        <begin position="389"/>
        <end position="548"/>
    </location>
</feature>
<feature type="active site" evidence="1">
    <location>
        <position position="225"/>
    </location>
</feature>
<feature type="glycosylation site" description="N-linked (GlcNAc...) asparagine" evidence="2">
    <location>
        <position position="416"/>
    </location>
</feature>
<feature type="glycosylation site" description="N-linked (GlcNAc...) asparagine" evidence="2">
    <location>
        <position position="431"/>
    </location>
</feature>
<feature type="glycosylation site" description="N-linked (GlcNAc...) asparagine" evidence="2">
    <location>
        <position position="473"/>
    </location>
</feature>
<feature type="glycosylation site" description="N-linked (GlcNAc...) asparagine" evidence="2">
    <location>
        <position position="602"/>
    </location>
</feature>
<feature type="glycosylation site" description="N-linked (GlcNAc...) asparagine" evidence="2">
    <location>
        <position position="627"/>
    </location>
</feature>
<accession>A1CUR8</accession>
<proteinExistence type="inferred from homology"/>
<keyword id="KW-0119">Carbohydrate metabolism</keyword>
<keyword id="KW-0136">Cellulose degradation</keyword>
<keyword id="KW-0325">Glycoprotein</keyword>
<keyword id="KW-0326">Glycosidase</keyword>
<keyword id="KW-0378">Hydrolase</keyword>
<keyword id="KW-0624">Polysaccharide degradation</keyword>
<keyword id="KW-1185">Reference proteome</keyword>
<keyword id="KW-0964">Secreted</keyword>
<organism>
    <name type="scientific">Aspergillus clavatus (strain ATCC 1007 / CBS 513.65 / DSM 816 / NCTC 3887 / NRRL 1 / QM 1276 / 107)</name>
    <dbReference type="NCBI Taxonomy" id="344612"/>
    <lineage>
        <taxon>Eukaryota</taxon>
        <taxon>Fungi</taxon>
        <taxon>Dikarya</taxon>
        <taxon>Ascomycota</taxon>
        <taxon>Pezizomycotina</taxon>
        <taxon>Eurotiomycetes</taxon>
        <taxon>Eurotiomycetidae</taxon>
        <taxon>Eurotiales</taxon>
        <taxon>Aspergillaceae</taxon>
        <taxon>Aspergillus</taxon>
        <taxon>Aspergillus subgen. Fumigati</taxon>
    </lineage>
</organism>
<gene>
    <name type="primary">bglH</name>
    <name type="ORF">ACLA_087610</name>
</gene>
<evidence type="ECO:0000250" key="1"/>
<evidence type="ECO:0000255" key="2"/>
<evidence type="ECO:0000255" key="3">
    <source>
        <dbReference type="PROSITE-ProRule" id="PRU01164"/>
    </source>
</evidence>
<evidence type="ECO:0000305" key="4"/>
<reference key="1">
    <citation type="journal article" date="2008" name="PLoS Genet.">
        <title>Genomic islands in the pathogenic filamentous fungus Aspergillus fumigatus.</title>
        <authorList>
            <person name="Fedorova N.D."/>
            <person name="Khaldi N."/>
            <person name="Joardar V.S."/>
            <person name="Maiti R."/>
            <person name="Amedeo P."/>
            <person name="Anderson M.J."/>
            <person name="Crabtree J."/>
            <person name="Silva J.C."/>
            <person name="Badger J.H."/>
            <person name="Albarraq A."/>
            <person name="Angiuoli S."/>
            <person name="Bussey H."/>
            <person name="Bowyer P."/>
            <person name="Cotty P.J."/>
            <person name="Dyer P.S."/>
            <person name="Egan A."/>
            <person name="Galens K."/>
            <person name="Fraser-Liggett C.M."/>
            <person name="Haas B.J."/>
            <person name="Inman J.M."/>
            <person name="Kent R."/>
            <person name="Lemieux S."/>
            <person name="Malavazi I."/>
            <person name="Orvis J."/>
            <person name="Roemer T."/>
            <person name="Ronning C.M."/>
            <person name="Sundaram J.P."/>
            <person name="Sutton G."/>
            <person name="Turner G."/>
            <person name="Venter J.C."/>
            <person name="White O.R."/>
            <person name="Whitty B.R."/>
            <person name="Youngman P."/>
            <person name="Wolfe K.H."/>
            <person name="Goldman G.H."/>
            <person name="Wortman J.R."/>
            <person name="Jiang B."/>
            <person name="Denning D.W."/>
            <person name="Nierman W.C."/>
        </authorList>
    </citation>
    <scope>NUCLEOTIDE SEQUENCE [LARGE SCALE GENOMIC DNA]</scope>
    <source>
        <strain>ATCC 1007 / CBS 513.65 / DSM 816 / NCTC 3887 / NRRL 1 / QM 1276 / 107</strain>
    </source>
</reference>
<protein>
    <recommendedName>
        <fullName>Probable beta-glucosidase H</fullName>
        <ecNumber>3.2.1.21</ecNumber>
    </recommendedName>
    <alternativeName>
        <fullName>Beta-D-glucoside glucohydrolase H</fullName>
    </alternativeName>
    <alternativeName>
        <fullName>Cellobiase H</fullName>
    </alternativeName>
    <alternativeName>
        <fullName>Gentiobiase H</fullName>
    </alternativeName>
</protein>
<comment type="function">
    <text evidence="1">Beta-glucosidases are one of a number of cellulolytic enzymes involved in the degradation of cellulosic biomass. Catalyzes the last step releasing glucose from the inhibitory cellobiose (By similarity).</text>
</comment>
<comment type="catalytic activity">
    <reaction>
        <text>Hydrolysis of terminal, non-reducing beta-D-glucosyl residues with release of beta-D-glucose.</text>
        <dbReference type="EC" id="3.2.1.21"/>
    </reaction>
</comment>
<comment type="pathway">
    <text>Glycan metabolism; cellulose degradation.</text>
</comment>
<comment type="subcellular location">
    <subcellularLocation>
        <location evidence="1">Secreted</location>
    </subcellularLocation>
</comment>
<comment type="similarity">
    <text evidence="4">Belongs to the glycosyl hydrolase 3 family.</text>
</comment>
<dbReference type="EC" id="3.2.1.21"/>
<dbReference type="EMBL" id="DS027060">
    <property type="protein sequence ID" value="EAW07055.1"/>
    <property type="molecule type" value="Genomic_DNA"/>
</dbReference>
<dbReference type="RefSeq" id="XP_001268481.1">
    <property type="nucleotide sequence ID" value="XM_001268480.1"/>
</dbReference>
<dbReference type="SMR" id="A1CUR8"/>
<dbReference type="STRING" id="344612.A1CUR8"/>
<dbReference type="GlyCosmos" id="A1CUR8">
    <property type="glycosylation" value="5 sites, No reported glycans"/>
</dbReference>
<dbReference type="EnsemblFungi" id="EAW07055">
    <property type="protein sequence ID" value="EAW07055"/>
    <property type="gene ID" value="ACLA_087610"/>
</dbReference>
<dbReference type="GeneID" id="4699856"/>
<dbReference type="KEGG" id="act:ACLA_087610"/>
<dbReference type="VEuPathDB" id="FungiDB:ACLA_087610"/>
<dbReference type="eggNOG" id="ENOG502SMPY">
    <property type="taxonomic scope" value="Eukaryota"/>
</dbReference>
<dbReference type="HOGENOM" id="CLU_004542_4_0_1"/>
<dbReference type="OMA" id="DVKHNPA"/>
<dbReference type="OrthoDB" id="47059at2759"/>
<dbReference type="UniPathway" id="UPA00696"/>
<dbReference type="Proteomes" id="UP000006701">
    <property type="component" value="Unassembled WGS sequence"/>
</dbReference>
<dbReference type="GO" id="GO:0005576">
    <property type="term" value="C:extracellular region"/>
    <property type="evidence" value="ECO:0007669"/>
    <property type="project" value="UniProtKB-SubCell"/>
</dbReference>
<dbReference type="GO" id="GO:0008422">
    <property type="term" value="F:beta-glucosidase activity"/>
    <property type="evidence" value="ECO:0007669"/>
    <property type="project" value="UniProtKB-EC"/>
</dbReference>
<dbReference type="GO" id="GO:0030245">
    <property type="term" value="P:cellulose catabolic process"/>
    <property type="evidence" value="ECO:0007669"/>
    <property type="project" value="UniProtKB-UniPathway"/>
</dbReference>
<dbReference type="FunFam" id="3.20.20.300:FF:000006">
    <property type="entry name" value="Beta-glucosidase H"/>
    <property type="match status" value="1"/>
</dbReference>
<dbReference type="FunFam" id="2.60.40.10:FF:000495">
    <property type="entry name" value="Periplasmic beta-glucosidase"/>
    <property type="match status" value="1"/>
</dbReference>
<dbReference type="FunFam" id="2.60.120.260:FF:000155">
    <property type="entry name" value="Probable beta-glucosidase H"/>
    <property type="match status" value="1"/>
</dbReference>
<dbReference type="Gene3D" id="2.60.120.260">
    <property type="entry name" value="Galactose-binding domain-like"/>
    <property type="match status" value="1"/>
</dbReference>
<dbReference type="Gene3D" id="3.40.50.1700">
    <property type="entry name" value="Glycoside hydrolase family 3 C-terminal domain"/>
    <property type="match status" value="1"/>
</dbReference>
<dbReference type="Gene3D" id="3.20.20.300">
    <property type="entry name" value="Glycoside hydrolase, family 3, N-terminal domain"/>
    <property type="match status" value="1"/>
</dbReference>
<dbReference type="Gene3D" id="2.60.40.10">
    <property type="entry name" value="Immunoglobulins"/>
    <property type="match status" value="1"/>
</dbReference>
<dbReference type="InterPro" id="IPR050288">
    <property type="entry name" value="Cellulose_deg_GH3"/>
</dbReference>
<dbReference type="InterPro" id="IPR026891">
    <property type="entry name" value="Fn3-like"/>
</dbReference>
<dbReference type="InterPro" id="IPR002772">
    <property type="entry name" value="Glyco_hydro_3_C"/>
</dbReference>
<dbReference type="InterPro" id="IPR036881">
    <property type="entry name" value="Glyco_hydro_3_C_sf"/>
</dbReference>
<dbReference type="InterPro" id="IPR001764">
    <property type="entry name" value="Glyco_hydro_3_N"/>
</dbReference>
<dbReference type="InterPro" id="IPR036962">
    <property type="entry name" value="Glyco_hydro_3_N_sf"/>
</dbReference>
<dbReference type="InterPro" id="IPR017853">
    <property type="entry name" value="Glycoside_hydrolase_SF"/>
</dbReference>
<dbReference type="InterPro" id="IPR013783">
    <property type="entry name" value="Ig-like_fold"/>
</dbReference>
<dbReference type="InterPro" id="IPR037524">
    <property type="entry name" value="PA14/GLEYA"/>
</dbReference>
<dbReference type="InterPro" id="IPR011658">
    <property type="entry name" value="PA14_dom"/>
</dbReference>
<dbReference type="PANTHER" id="PTHR42715">
    <property type="entry name" value="BETA-GLUCOSIDASE"/>
    <property type="match status" value="1"/>
</dbReference>
<dbReference type="PANTHER" id="PTHR42715:SF17">
    <property type="entry name" value="BETA-GLUCOSIDASE H-RELATED"/>
    <property type="match status" value="1"/>
</dbReference>
<dbReference type="Pfam" id="PF14310">
    <property type="entry name" value="Fn3-like"/>
    <property type="match status" value="1"/>
</dbReference>
<dbReference type="Pfam" id="PF00933">
    <property type="entry name" value="Glyco_hydro_3"/>
    <property type="match status" value="1"/>
</dbReference>
<dbReference type="Pfam" id="PF01915">
    <property type="entry name" value="Glyco_hydro_3_C"/>
    <property type="match status" value="1"/>
</dbReference>
<dbReference type="Pfam" id="PF07691">
    <property type="entry name" value="PA14"/>
    <property type="match status" value="1"/>
</dbReference>
<dbReference type="PRINTS" id="PR00133">
    <property type="entry name" value="GLHYDRLASE3"/>
</dbReference>
<dbReference type="SMART" id="SM01217">
    <property type="entry name" value="Fn3_like"/>
    <property type="match status" value="1"/>
</dbReference>
<dbReference type="SMART" id="SM00758">
    <property type="entry name" value="PA14"/>
    <property type="match status" value="1"/>
</dbReference>
<dbReference type="SUPFAM" id="SSF51445">
    <property type="entry name" value="(Trans)glycosidases"/>
    <property type="match status" value="1"/>
</dbReference>
<dbReference type="SUPFAM" id="SSF56988">
    <property type="entry name" value="Anthrax protective antigen"/>
    <property type="match status" value="1"/>
</dbReference>
<dbReference type="SUPFAM" id="SSF52279">
    <property type="entry name" value="Beta-D-glucan exohydrolase, C-terminal domain"/>
    <property type="match status" value="1"/>
</dbReference>
<dbReference type="PROSITE" id="PS51820">
    <property type="entry name" value="PA14"/>
    <property type="match status" value="1"/>
</dbReference>
<sequence>MTAKFDVDHVLNSISEDDKIALLSGTDFWHTYSIPEHNVPPIRTTDGPNGVRGTKFFAGVPAACLPCGTALGATWDRDLLHKAGVLLGQECLAKGAHCWLGPTINMQRSPLGGRGFESFAEDPHLSGTMAKSIILGCESTGVISAVKHYVGNDQEHERRAVDVMVTPRALREIYLRPFQIVARDAHSGALMTSYNKINGKHVVENPAMYDIIRKEWKWDPLIMSDWLGTYTTIDSLNAGLDLEMPGPSRYRGKYIESAVQARLVKQSTIDQRARKVLEFAARASQAPASAVESGRDYPEDRALNREICGNSIVLLKNEDTLLPLPKKIKKIALIGSHVKTPAISGGGSASLQPYYAVSLYDAIIEVLPDTEIIYETGAYAHKMLPVIDRMLSNAVIRFYNEPADKERTLLSTEPVNNTAFQLMDYNTPGLNRTLFWATLDGEFTPDVSGLWDFGLTVFGTATLYIDDEMVIDNTTQQTRGTAFFGKGTIQEVGAKELTAGRTYKIRIEFGSANTSPIKAIGVVHFGGGAAHLGAFLHMDPEQMVRDAVKAASEADYTILCTGLNRDWESEGFDRPDMDLPPRIDALISAVLDVAGDKTIIVNQSGTPVMMPWSDRARAIIQAWYGGNETGHGIADVLFGDVNPCAKLPLSWPADVRHNPAYLNSLSVGGRMLYGEDIYVGYRFYEKIGQVTLFPFGHGLSYTLFEVSPKVTVSPTAFTVETPLSATVRIKNTGPVAGAQILQLYVAAPTSATPRPVKELQGFSKVFLQSGEEKTVVISVDKYATSFWDGIEDMWKSEAGVYQVLIGTSSQDIVARGEFTVDETTFWTGV</sequence>
<name>BGLH_ASPCL</name>